<name>FLUC_THEKO</name>
<dbReference type="EMBL" id="AP006878">
    <property type="protein sequence ID" value="BAD84703.1"/>
    <property type="molecule type" value="Genomic_DNA"/>
</dbReference>
<dbReference type="RefSeq" id="WP_011249469.1">
    <property type="nucleotide sequence ID" value="NC_006624.1"/>
</dbReference>
<dbReference type="SMR" id="Q5JF03"/>
<dbReference type="FunCoup" id="Q5JF03">
    <property type="interactions" value="2"/>
</dbReference>
<dbReference type="STRING" id="69014.TK0514"/>
<dbReference type="EnsemblBacteria" id="BAD84703">
    <property type="protein sequence ID" value="BAD84703"/>
    <property type="gene ID" value="TK0514"/>
</dbReference>
<dbReference type="GeneID" id="78447027"/>
<dbReference type="KEGG" id="tko:TK0514"/>
<dbReference type="PATRIC" id="fig|69014.16.peg.504"/>
<dbReference type="eggNOG" id="arCOG04701">
    <property type="taxonomic scope" value="Archaea"/>
</dbReference>
<dbReference type="HOGENOM" id="CLU_114342_3_0_2"/>
<dbReference type="InParanoid" id="Q5JF03"/>
<dbReference type="OrthoDB" id="253428at2157"/>
<dbReference type="PhylomeDB" id="Q5JF03"/>
<dbReference type="Proteomes" id="UP000000536">
    <property type="component" value="Chromosome"/>
</dbReference>
<dbReference type="GO" id="GO:0005886">
    <property type="term" value="C:plasma membrane"/>
    <property type="evidence" value="ECO:0000318"/>
    <property type="project" value="GO_Central"/>
</dbReference>
<dbReference type="GO" id="GO:0062054">
    <property type="term" value="F:fluoride channel activity"/>
    <property type="evidence" value="ECO:0007669"/>
    <property type="project" value="UniProtKB-UniRule"/>
</dbReference>
<dbReference type="GO" id="GO:1903425">
    <property type="term" value="F:fluoride transmembrane transporter activity"/>
    <property type="evidence" value="ECO:0000318"/>
    <property type="project" value="GO_Central"/>
</dbReference>
<dbReference type="GO" id="GO:0046872">
    <property type="term" value="F:metal ion binding"/>
    <property type="evidence" value="ECO:0007669"/>
    <property type="project" value="UniProtKB-KW"/>
</dbReference>
<dbReference type="GO" id="GO:0140114">
    <property type="term" value="P:cellular detoxification of fluoride"/>
    <property type="evidence" value="ECO:0007669"/>
    <property type="project" value="UniProtKB-UniRule"/>
</dbReference>
<dbReference type="GO" id="GO:1903424">
    <property type="term" value="P:fluoride transmembrane transport"/>
    <property type="evidence" value="ECO:0000318"/>
    <property type="project" value="GO_Central"/>
</dbReference>
<dbReference type="HAMAP" id="MF_00454">
    <property type="entry name" value="FluC"/>
    <property type="match status" value="1"/>
</dbReference>
<dbReference type="InterPro" id="IPR003691">
    <property type="entry name" value="FluC"/>
</dbReference>
<dbReference type="NCBIfam" id="TIGR00494">
    <property type="entry name" value="crcB"/>
    <property type="match status" value="1"/>
</dbReference>
<dbReference type="PANTHER" id="PTHR28259">
    <property type="entry name" value="FLUORIDE EXPORT PROTEIN 1-RELATED"/>
    <property type="match status" value="1"/>
</dbReference>
<dbReference type="PANTHER" id="PTHR28259:SF1">
    <property type="entry name" value="FLUORIDE EXPORT PROTEIN 1-RELATED"/>
    <property type="match status" value="1"/>
</dbReference>
<dbReference type="Pfam" id="PF02537">
    <property type="entry name" value="CRCB"/>
    <property type="match status" value="1"/>
</dbReference>
<feature type="chain" id="PRO_0000110236" description="Fluoride-specific ion channel FluC">
    <location>
        <begin position="1"/>
        <end position="123"/>
    </location>
</feature>
<feature type="transmembrane region" description="Helical" evidence="1">
    <location>
        <begin position="7"/>
        <end position="27"/>
    </location>
</feature>
<feature type="transmembrane region" description="Helical" evidence="1">
    <location>
        <begin position="39"/>
        <end position="59"/>
    </location>
</feature>
<feature type="transmembrane region" description="Helical" evidence="1">
    <location>
        <begin position="68"/>
        <end position="88"/>
    </location>
</feature>
<feature type="transmembrane region" description="Helical" evidence="1">
    <location>
        <begin position="101"/>
        <end position="121"/>
    </location>
</feature>
<feature type="binding site" evidence="1">
    <location>
        <position position="75"/>
    </location>
    <ligand>
        <name>Na(+)</name>
        <dbReference type="ChEBI" id="CHEBI:29101"/>
        <note>structural</note>
    </ligand>
</feature>
<feature type="binding site" evidence="1">
    <location>
        <position position="78"/>
    </location>
    <ligand>
        <name>Na(+)</name>
        <dbReference type="ChEBI" id="CHEBI:29101"/>
        <note>structural</note>
    </ligand>
</feature>
<organism>
    <name type="scientific">Thermococcus kodakarensis (strain ATCC BAA-918 / JCM 12380 / KOD1)</name>
    <name type="common">Pyrococcus kodakaraensis (strain KOD1)</name>
    <dbReference type="NCBI Taxonomy" id="69014"/>
    <lineage>
        <taxon>Archaea</taxon>
        <taxon>Methanobacteriati</taxon>
        <taxon>Methanobacteriota</taxon>
        <taxon>Thermococci</taxon>
        <taxon>Thermococcales</taxon>
        <taxon>Thermococcaceae</taxon>
        <taxon>Thermococcus</taxon>
    </lineage>
</organism>
<proteinExistence type="inferred from homology"/>
<sequence>MNLRIAMAIALGGAFGAVARFYISGLLPVYRDFPVGTLMVNSIASLILGYLYGLLFWGFDVPPDWRAFFGTGFCGALSTFSTFSYETFSLLREREYLIATLNILANVIITIALVFAGFMLARR</sequence>
<reference key="1">
    <citation type="journal article" date="2005" name="Genome Res.">
        <title>Complete genome sequence of the hyperthermophilic archaeon Thermococcus kodakaraensis KOD1 and comparison with Pyrococcus genomes.</title>
        <authorList>
            <person name="Fukui T."/>
            <person name="Atomi H."/>
            <person name="Kanai T."/>
            <person name="Matsumi R."/>
            <person name="Fujiwara S."/>
            <person name="Imanaka T."/>
        </authorList>
    </citation>
    <scope>NUCLEOTIDE SEQUENCE [LARGE SCALE GENOMIC DNA]</scope>
    <source>
        <strain>ATCC BAA-918 / JCM 12380 / KOD1</strain>
    </source>
</reference>
<keyword id="KW-1003">Cell membrane</keyword>
<keyword id="KW-0407">Ion channel</keyword>
<keyword id="KW-0406">Ion transport</keyword>
<keyword id="KW-0472">Membrane</keyword>
<keyword id="KW-0479">Metal-binding</keyword>
<keyword id="KW-1185">Reference proteome</keyword>
<keyword id="KW-0915">Sodium</keyword>
<keyword id="KW-0812">Transmembrane</keyword>
<keyword id="KW-1133">Transmembrane helix</keyword>
<keyword id="KW-0813">Transport</keyword>
<evidence type="ECO:0000255" key="1">
    <source>
        <dbReference type="HAMAP-Rule" id="MF_00454"/>
    </source>
</evidence>
<accession>Q5JF03</accession>
<protein>
    <recommendedName>
        <fullName evidence="1">Fluoride-specific ion channel FluC</fullName>
    </recommendedName>
</protein>
<comment type="function">
    <text evidence="1">Fluoride-specific ion channel. Important for reducing fluoride concentration in the cell, thus reducing its toxicity.</text>
</comment>
<comment type="catalytic activity">
    <reaction evidence="1">
        <text>fluoride(in) = fluoride(out)</text>
        <dbReference type="Rhea" id="RHEA:76159"/>
        <dbReference type="ChEBI" id="CHEBI:17051"/>
    </reaction>
    <physiologicalReaction direction="left-to-right" evidence="1">
        <dbReference type="Rhea" id="RHEA:76160"/>
    </physiologicalReaction>
</comment>
<comment type="activity regulation">
    <text evidence="1">Na(+) is not transported, but it plays an essential structural role and its presence is essential for fluoride channel function.</text>
</comment>
<comment type="subcellular location">
    <subcellularLocation>
        <location evidence="1">Cell membrane</location>
        <topology evidence="1">Multi-pass membrane protein</topology>
    </subcellularLocation>
</comment>
<comment type="similarity">
    <text evidence="1">Belongs to the fluoride channel Fluc/FEX (TC 1.A.43) family.</text>
</comment>
<gene>
    <name evidence="1" type="primary">fluC</name>
    <name evidence="1" type="synonym">crcB</name>
    <name type="ordered locus">TK0514</name>
</gene>